<organism>
    <name type="scientific">Actinobacillus pleuropneumoniae serotype 3 (strain JL03)</name>
    <dbReference type="NCBI Taxonomy" id="434271"/>
    <lineage>
        <taxon>Bacteria</taxon>
        <taxon>Pseudomonadati</taxon>
        <taxon>Pseudomonadota</taxon>
        <taxon>Gammaproteobacteria</taxon>
        <taxon>Pasteurellales</taxon>
        <taxon>Pasteurellaceae</taxon>
        <taxon>Actinobacillus</taxon>
    </lineage>
</organism>
<feature type="chain" id="PRO_0000414814" description="23S rRNA (uracil(747)-C(5))-methyltransferase RlmC">
    <location>
        <begin position="1"/>
        <end position="391"/>
    </location>
</feature>
<feature type="active site" description="Nucleophile" evidence="1">
    <location>
        <position position="349"/>
    </location>
</feature>
<feature type="binding site" evidence="1">
    <location>
        <position position="5"/>
    </location>
    <ligand>
        <name>[4Fe-4S] cluster</name>
        <dbReference type="ChEBI" id="CHEBI:49883"/>
    </ligand>
</feature>
<feature type="binding site" evidence="1">
    <location>
        <position position="13"/>
    </location>
    <ligand>
        <name>[4Fe-4S] cluster</name>
        <dbReference type="ChEBI" id="CHEBI:49883"/>
    </ligand>
</feature>
<feature type="binding site" evidence="1">
    <location>
        <position position="16"/>
    </location>
    <ligand>
        <name>[4Fe-4S] cluster</name>
        <dbReference type="ChEBI" id="CHEBI:49883"/>
    </ligand>
</feature>
<feature type="binding site" evidence="1">
    <location>
        <position position="95"/>
    </location>
    <ligand>
        <name>[4Fe-4S] cluster</name>
        <dbReference type="ChEBI" id="CHEBI:49883"/>
    </ligand>
</feature>
<feature type="binding site" evidence="1">
    <location>
        <position position="220"/>
    </location>
    <ligand>
        <name>S-adenosyl-L-methionine</name>
        <dbReference type="ChEBI" id="CHEBI:59789"/>
    </ligand>
</feature>
<feature type="binding site" evidence="1">
    <location>
        <position position="249"/>
    </location>
    <ligand>
        <name>S-adenosyl-L-methionine</name>
        <dbReference type="ChEBI" id="CHEBI:59789"/>
    </ligand>
</feature>
<feature type="binding site" evidence="1">
    <location>
        <position position="276"/>
    </location>
    <ligand>
        <name>S-adenosyl-L-methionine</name>
        <dbReference type="ChEBI" id="CHEBI:59789"/>
    </ligand>
</feature>
<feature type="binding site" evidence="1">
    <location>
        <position position="322"/>
    </location>
    <ligand>
        <name>S-adenosyl-L-methionine</name>
        <dbReference type="ChEBI" id="CHEBI:59789"/>
    </ligand>
</feature>
<sequence length="391" mass="44117">MILNCPHFQQQDCVSCQWLEKPYATQLTDKEIDLKRLISPFILQNFTEILPPVQSSQKQFRNKAKMVVSGSVERPILGILKDQIDPQSGIDLCDCPLYPTEFEAIFPILKDFIARAGLVPYNIAKKKGELKYILLTQSRYNQSVMLRFVLRSEQKRPLVERELPNLLAKLPKDSVVSLNIQPQHAAILEGETEIFLTEKTTIEENFNDIPLFIRPQGFFQTNPNVASRLYATAQNWIKDLPIQQFWDLFCGVGGFGLHCAKALQEKNENVQLTGIEISASAIASATQSAAQLQLKNVTFASLDSAQFALNDKGKSPDLVIVNPPRRGIGKPLAEFLNELGTPYLIYSSCNAQTMAKDFEALSNYSLQKVQLFDMFPHTSHYEVLTFLVKKS</sequence>
<accession>B0BQ52</accession>
<evidence type="ECO:0000255" key="1">
    <source>
        <dbReference type="HAMAP-Rule" id="MF_01012"/>
    </source>
</evidence>
<proteinExistence type="inferred from homology"/>
<dbReference type="EC" id="2.1.1.189" evidence="1"/>
<dbReference type="EMBL" id="CP000687">
    <property type="protein sequence ID" value="ABY69687.1"/>
    <property type="molecule type" value="Genomic_DNA"/>
</dbReference>
<dbReference type="RefSeq" id="WP_012263105.1">
    <property type="nucleotide sequence ID" value="NC_010278.1"/>
</dbReference>
<dbReference type="SMR" id="B0BQ52"/>
<dbReference type="KEGG" id="apj:APJL_1131"/>
<dbReference type="HOGENOM" id="CLU_014689_0_0_6"/>
<dbReference type="Proteomes" id="UP000008547">
    <property type="component" value="Chromosome"/>
</dbReference>
<dbReference type="GO" id="GO:0051539">
    <property type="term" value="F:4 iron, 4 sulfur cluster binding"/>
    <property type="evidence" value="ECO:0007669"/>
    <property type="project" value="UniProtKB-KW"/>
</dbReference>
<dbReference type="GO" id="GO:0005506">
    <property type="term" value="F:iron ion binding"/>
    <property type="evidence" value="ECO:0007669"/>
    <property type="project" value="UniProtKB-UniRule"/>
</dbReference>
<dbReference type="GO" id="GO:0070041">
    <property type="term" value="F:rRNA (uridine-C5-)-methyltransferase activity"/>
    <property type="evidence" value="ECO:0007669"/>
    <property type="project" value="UniProtKB-UniRule"/>
</dbReference>
<dbReference type="GO" id="GO:0070475">
    <property type="term" value="P:rRNA base methylation"/>
    <property type="evidence" value="ECO:0007669"/>
    <property type="project" value="TreeGrafter"/>
</dbReference>
<dbReference type="CDD" id="cd02440">
    <property type="entry name" value="AdoMet_MTases"/>
    <property type="match status" value="1"/>
</dbReference>
<dbReference type="Gene3D" id="2.40.50.1070">
    <property type="match status" value="1"/>
</dbReference>
<dbReference type="Gene3D" id="3.40.50.150">
    <property type="entry name" value="Vaccinia Virus protein VP39"/>
    <property type="match status" value="1"/>
</dbReference>
<dbReference type="HAMAP" id="MF_01012">
    <property type="entry name" value="23SrRNA_methyltr_RlmC"/>
    <property type="match status" value="1"/>
</dbReference>
<dbReference type="InterPro" id="IPR011825">
    <property type="entry name" value="23SrRNA_MeTrfase_RlmC"/>
</dbReference>
<dbReference type="InterPro" id="IPR030390">
    <property type="entry name" value="MeTrfase_TrmA_AS"/>
</dbReference>
<dbReference type="InterPro" id="IPR030391">
    <property type="entry name" value="MeTrfase_TrmA_CS"/>
</dbReference>
<dbReference type="InterPro" id="IPR029063">
    <property type="entry name" value="SAM-dependent_MTases_sf"/>
</dbReference>
<dbReference type="InterPro" id="IPR010280">
    <property type="entry name" value="U5_MeTrfase_fam"/>
</dbReference>
<dbReference type="NCBIfam" id="TIGR02085">
    <property type="entry name" value="meth_trns_rumB"/>
    <property type="match status" value="1"/>
</dbReference>
<dbReference type="PANTHER" id="PTHR11061">
    <property type="entry name" value="RNA M5U METHYLTRANSFERASE"/>
    <property type="match status" value="1"/>
</dbReference>
<dbReference type="PANTHER" id="PTHR11061:SF30">
    <property type="entry name" value="TRNA (URACIL(54)-C(5))-METHYLTRANSFERASE"/>
    <property type="match status" value="1"/>
</dbReference>
<dbReference type="Pfam" id="PF05958">
    <property type="entry name" value="tRNA_U5-meth_tr"/>
    <property type="match status" value="1"/>
</dbReference>
<dbReference type="SUPFAM" id="SSF53335">
    <property type="entry name" value="S-adenosyl-L-methionine-dependent methyltransferases"/>
    <property type="match status" value="1"/>
</dbReference>
<dbReference type="PROSITE" id="PS51687">
    <property type="entry name" value="SAM_MT_RNA_M5U"/>
    <property type="match status" value="1"/>
</dbReference>
<dbReference type="PROSITE" id="PS01230">
    <property type="entry name" value="TRMA_1"/>
    <property type="match status" value="1"/>
</dbReference>
<dbReference type="PROSITE" id="PS01231">
    <property type="entry name" value="TRMA_2"/>
    <property type="match status" value="1"/>
</dbReference>
<name>RLMC_ACTPJ</name>
<gene>
    <name evidence="1" type="primary">rlmC</name>
    <name type="ordered locus">APJL_1131</name>
</gene>
<reference key="1">
    <citation type="journal article" date="2008" name="PLoS ONE">
        <title>Genome biology of Actinobacillus pleuropneumoniae JL03, an isolate of serotype 3 prevalent in China.</title>
        <authorList>
            <person name="Xu Z."/>
            <person name="Zhou Y."/>
            <person name="Li L."/>
            <person name="Zhou R."/>
            <person name="Xiao S."/>
            <person name="Wan Y."/>
            <person name="Zhang S."/>
            <person name="Wang K."/>
            <person name="Li W."/>
            <person name="Li L."/>
            <person name="Jin H."/>
            <person name="Kang M."/>
            <person name="Dalai B."/>
            <person name="Li T."/>
            <person name="Liu L."/>
            <person name="Cheng Y."/>
            <person name="Zhang L."/>
            <person name="Xu T."/>
            <person name="Zheng H."/>
            <person name="Pu S."/>
            <person name="Wang B."/>
            <person name="Gu W."/>
            <person name="Zhang X.L."/>
            <person name="Zhu G.-F."/>
            <person name="Wang S."/>
            <person name="Zhao G.-P."/>
            <person name="Chen H."/>
        </authorList>
    </citation>
    <scope>NUCLEOTIDE SEQUENCE [LARGE SCALE GENOMIC DNA]</scope>
    <source>
        <strain>JL03</strain>
    </source>
</reference>
<protein>
    <recommendedName>
        <fullName evidence="1">23S rRNA (uracil(747)-C(5))-methyltransferase RlmC</fullName>
        <ecNumber evidence="1">2.1.1.189</ecNumber>
    </recommendedName>
    <alternativeName>
        <fullName evidence="1">23S rRNA(m5U747)-methyltransferase</fullName>
    </alternativeName>
</protein>
<keyword id="KW-0004">4Fe-4S</keyword>
<keyword id="KW-0408">Iron</keyword>
<keyword id="KW-0411">Iron-sulfur</keyword>
<keyword id="KW-0479">Metal-binding</keyword>
<keyword id="KW-0489">Methyltransferase</keyword>
<keyword id="KW-0698">rRNA processing</keyword>
<keyword id="KW-0949">S-adenosyl-L-methionine</keyword>
<keyword id="KW-0808">Transferase</keyword>
<comment type="function">
    <text evidence="1">Catalyzes the formation of 5-methyl-uridine at position 747 (m5U747) in 23S rRNA.</text>
</comment>
<comment type="catalytic activity">
    <reaction evidence="1">
        <text>uridine(747) in 23S rRNA + S-adenosyl-L-methionine = 5-methyluridine(747) in 23S rRNA + S-adenosyl-L-homocysteine + H(+)</text>
        <dbReference type="Rhea" id="RHEA:42628"/>
        <dbReference type="Rhea" id="RHEA-COMP:10154"/>
        <dbReference type="Rhea" id="RHEA-COMP:10155"/>
        <dbReference type="ChEBI" id="CHEBI:15378"/>
        <dbReference type="ChEBI" id="CHEBI:57856"/>
        <dbReference type="ChEBI" id="CHEBI:59789"/>
        <dbReference type="ChEBI" id="CHEBI:65315"/>
        <dbReference type="ChEBI" id="CHEBI:74447"/>
        <dbReference type="EC" id="2.1.1.189"/>
    </reaction>
</comment>
<comment type="similarity">
    <text evidence="1">Belongs to the class I-like SAM-binding methyltransferase superfamily. RNA M5U methyltransferase family. RlmC subfamily.</text>
</comment>